<organism>
    <name type="scientific">Ectopseudomonas mendocina (strain ymp)</name>
    <name type="common">Pseudomonas mendocina</name>
    <dbReference type="NCBI Taxonomy" id="399739"/>
    <lineage>
        <taxon>Bacteria</taxon>
        <taxon>Pseudomonadati</taxon>
        <taxon>Pseudomonadota</taxon>
        <taxon>Gammaproteobacteria</taxon>
        <taxon>Pseudomonadales</taxon>
        <taxon>Pseudomonadaceae</taxon>
        <taxon>Ectopseudomonas</taxon>
    </lineage>
</organism>
<reference key="1">
    <citation type="submission" date="2007-04" db="EMBL/GenBank/DDBJ databases">
        <title>Complete sequence of Pseudomonas mendocina ymp.</title>
        <authorList>
            <consortium name="US DOE Joint Genome Institute"/>
            <person name="Copeland A."/>
            <person name="Lucas S."/>
            <person name="Lapidus A."/>
            <person name="Barry K."/>
            <person name="Glavina del Rio T."/>
            <person name="Dalin E."/>
            <person name="Tice H."/>
            <person name="Pitluck S."/>
            <person name="Kiss H."/>
            <person name="Brettin T."/>
            <person name="Detter J.C."/>
            <person name="Bruce D."/>
            <person name="Han C."/>
            <person name="Schmutz J."/>
            <person name="Larimer F."/>
            <person name="Land M."/>
            <person name="Hauser L."/>
            <person name="Kyrpides N."/>
            <person name="Mikhailova N."/>
            <person name="Hersman L."/>
            <person name="Dubois J."/>
            <person name="Maurice P."/>
            <person name="Richardson P."/>
        </authorList>
    </citation>
    <scope>NUCLEOTIDE SEQUENCE [LARGE SCALE GENOMIC DNA]</scope>
    <source>
        <strain>ymp</strain>
    </source>
</reference>
<name>ISPE_ECTM1</name>
<proteinExistence type="inferred from homology"/>
<gene>
    <name evidence="1" type="primary">ispE</name>
    <name type="ordered locus">Pmen_1056</name>
</gene>
<protein>
    <recommendedName>
        <fullName evidence="1">4-diphosphocytidyl-2-C-methyl-D-erythritol kinase</fullName>
        <shortName evidence="1">CMK</shortName>
        <ecNumber evidence="1">2.7.1.148</ecNumber>
    </recommendedName>
    <alternativeName>
        <fullName evidence="1">4-(cytidine-5'-diphospho)-2-C-methyl-D-erythritol kinase</fullName>
    </alternativeName>
</protein>
<keyword id="KW-0067">ATP-binding</keyword>
<keyword id="KW-0414">Isoprene biosynthesis</keyword>
<keyword id="KW-0418">Kinase</keyword>
<keyword id="KW-0547">Nucleotide-binding</keyword>
<keyword id="KW-0808">Transferase</keyword>
<feature type="chain" id="PRO_0000335742" description="4-diphosphocytidyl-2-C-methyl-D-erythritol kinase">
    <location>
        <begin position="1"/>
        <end position="291"/>
    </location>
</feature>
<feature type="active site" evidence="1">
    <location>
        <position position="19"/>
    </location>
</feature>
<feature type="active site" evidence="1">
    <location>
        <position position="144"/>
    </location>
</feature>
<feature type="binding site" evidence="1">
    <location>
        <begin position="102"/>
        <end position="112"/>
    </location>
    <ligand>
        <name>ATP</name>
        <dbReference type="ChEBI" id="CHEBI:30616"/>
    </ligand>
</feature>
<comment type="function">
    <text evidence="1">Catalyzes the phosphorylation of the position 2 hydroxy group of 4-diphosphocytidyl-2C-methyl-D-erythritol.</text>
</comment>
<comment type="catalytic activity">
    <reaction evidence="1">
        <text>4-CDP-2-C-methyl-D-erythritol + ATP = 4-CDP-2-C-methyl-D-erythritol 2-phosphate + ADP + H(+)</text>
        <dbReference type="Rhea" id="RHEA:18437"/>
        <dbReference type="ChEBI" id="CHEBI:15378"/>
        <dbReference type="ChEBI" id="CHEBI:30616"/>
        <dbReference type="ChEBI" id="CHEBI:57823"/>
        <dbReference type="ChEBI" id="CHEBI:57919"/>
        <dbReference type="ChEBI" id="CHEBI:456216"/>
        <dbReference type="EC" id="2.7.1.148"/>
    </reaction>
</comment>
<comment type="pathway">
    <text evidence="1">Isoprenoid biosynthesis; isopentenyl diphosphate biosynthesis via DXP pathway; isopentenyl diphosphate from 1-deoxy-D-xylulose 5-phosphate: step 3/6.</text>
</comment>
<comment type="similarity">
    <text evidence="1">Belongs to the GHMP kinase family. IspE subfamily.</text>
</comment>
<accession>A4XR57</accession>
<evidence type="ECO:0000255" key="1">
    <source>
        <dbReference type="HAMAP-Rule" id="MF_00061"/>
    </source>
</evidence>
<sequence>MTSATIPAHAELILPAPAKLNLMLHILGRRADGYHQLQTLFQFLDHGDELGFSVRQDGEIRLHTPIDGVPHASNLIVRAAKRLQEASGTTLGADIWLDKRLPMGGGIGGGSSDAATTLLGLDHLWHTRLGEDRLAEIGLALGADVPVFVRGRAAFAEGVGELLTPVELEEPWFLVAVPQVFVSTAEVFGAPELTRDTPPIKVRSLLAGGGRNDCQPVVEKRYPEVRNALILLNKFVSARLTGTGACIFGSFPNRDDADKVARQLPGTLPSFVAQGRNISMLHRRLQALAKK</sequence>
<dbReference type="EC" id="2.7.1.148" evidence="1"/>
<dbReference type="EMBL" id="CP000680">
    <property type="protein sequence ID" value="ABP83823.1"/>
    <property type="molecule type" value="Genomic_DNA"/>
</dbReference>
<dbReference type="SMR" id="A4XR57"/>
<dbReference type="STRING" id="399739.Pmen_1056"/>
<dbReference type="KEGG" id="pmy:Pmen_1056"/>
<dbReference type="PATRIC" id="fig|399739.8.peg.1065"/>
<dbReference type="eggNOG" id="COG1947">
    <property type="taxonomic scope" value="Bacteria"/>
</dbReference>
<dbReference type="HOGENOM" id="CLU_053057_3_0_6"/>
<dbReference type="OrthoDB" id="9809438at2"/>
<dbReference type="UniPathway" id="UPA00056">
    <property type="reaction ID" value="UER00094"/>
</dbReference>
<dbReference type="GO" id="GO:0050515">
    <property type="term" value="F:4-(cytidine 5'-diphospho)-2-C-methyl-D-erythritol kinase activity"/>
    <property type="evidence" value="ECO:0007669"/>
    <property type="project" value="UniProtKB-UniRule"/>
</dbReference>
<dbReference type="GO" id="GO:0005524">
    <property type="term" value="F:ATP binding"/>
    <property type="evidence" value="ECO:0007669"/>
    <property type="project" value="UniProtKB-UniRule"/>
</dbReference>
<dbReference type="GO" id="GO:0019288">
    <property type="term" value="P:isopentenyl diphosphate biosynthetic process, methylerythritol 4-phosphate pathway"/>
    <property type="evidence" value="ECO:0007669"/>
    <property type="project" value="UniProtKB-UniRule"/>
</dbReference>
<dbReference type="GO" id="GO:0016114">
    <property type="term" value="P:terpenoid biosynthetic process"/>
    <property type="evidence" value="ECO:0007669"/>
    <property type="project" value="InterPro"/>
</dbReference>
<dbReference type="FunFam" id="3.30.230.10:FF:000022">
    <property type="entry name" value="4-diphosphocytidyl-2-C-methyl-D-erythritol kinase"/>
    <property type="match status" value="1"/>
</dbReference>
<dbReference type="Gene3D" id="3.30.230.10">
    <property type="match status" value="1"/>
</dbReference>
<dbReference type="Gene3D" id="3.30.70.890">
    <property type="entry name" value="GHMP kinase, C-terminal domain"/>
    <property type="match status" value="1"/>
</dbReference>
<dbReference type="HAMAP" id="MF_00061">
    <property type="entry name" value="IspE"/>
    <property type="match status" value="1"/>
</dbReference>
<dbReference type="InterPro" id="IPR013750">
    <property type="entry name" value="GHMP_kinase_C_dom"/>
</dbReference>
<dbReference type="InterPro" id="IPR036554">
    <property type="entry name" value="GHMP_kinase_C_sf"/>
</dbReference>
<dbReference type="InterPro" id="IPR006204">
    <property type="entry name" value="GHMP_kinase_N_dom"/>
</dbReference>
<dbReference type="InterPro" id="IPR004424">
    <property type="entry name" value="IspE"/>
</dbReference>
<dbReference type="InterPro" id="IPR020568">
    <property type="entry name" value="Ribosomal_Su5_D2-typ_SF"/>
</dbReference>
<dbReference type="InterPro" id="IPR014721">
    <property type="entry name" value="Ribsml_uS5_D2-typ_fold_subgr"/>
</dbReference>
<dbReference type="NCBIfam" id="TIGR00154">
    <property type="entry name" value="ispE"/>
    <property type="match status" value="1"/>
</dbReference>
<dbReference type="PANTHER" id="PTHR43527">
    <property type="entry name" value="4-DIPHOSPHOCYTIDYL-2-C-METHYL-D-ERYTHRITOL KINASE, CHLOROPLASTIC"/>
    <property type="match status" value="1"/>
</dbReference>
<dbReference type="PANTHER" id="PTHR43527:SF2">
    <property type="entry name" value="4-DIPHOSPHOCYTIDYL-2-C-METHYL-D-ERYTHRITOL KINASE, CHLOROPLASTIC"/>
    <property type="match status" value="1"/>
</dbReference>
<dbReference type="Pfam" id="PF08544">
    <property type="entry name" value="GHMP_kinases_C"/>
    <property type="match status" value="1"/>
</dbReference>
<dbReference type="Pfam" id="PF00288">
    <property type="entry name" value="GHMP_kinases_N"/>
    <property type="match status" value="1"/>
</dbReference>
<dbReference type="PIRSF" id="PIRSF010376">
    <property type="entry name" value="IspE"/>
    <property type="match status" value="1"/>
</dbReference>
<dbReference type="SUPFAM" id="SSF55060">
    <property type="entry name" value="GHMP Kinase, C-terminal domain"/>
    <property type="match status" value="1"/>
</dbReference>
<dbReference type="SUPFAM" id="SSF54211">
    <property type="entry name" value="Ribosomal protein S5 domain 2-like"/>
    <property type="match status" value="1"/>
</dbReference>